<protein>
    <recommendedName>
        <fullName>Minor tail protein Gp27</fullName>
    </recommendedName>
</protein>
<gene>
    <name type="primary">27</name>
</gene>
<proteinExistence type="evidence at protein level"/>
<organism>
    <name type="scientific">Mycobacterium phage L5</name>
    <name type="common">Mycobacteriophage L5</name>
    <dbReference type="NCBI Taxonomy" id="31757"/>
    <lineage>
        <taxon>Viruses</taxon>
        <taxon>Duplodnaviria</taxon>
        <taxon>Heunggongvirae</taxon>
        <taxon>Uroviricota</taxon>
        <taxon>Caudoviricetes</taxon>
        <taxon>Fromanvirus</taxon>
    </lineage>
</organism>
<organismHost>
    <name type="scientific">Mycobacterium</name>
    <dbReference type="NCBI Taxonomy" id="1763"/>
</organismHost>
<name>VG27_BPML5</name>
<keyword id="KW-0903">Direct protein sequencing</keyword>
<keyword id="KW-1185">Reference proteome</keyword>
<feature type="chain" id="PRO_0000164743" description="Minor tail protein Gp27">
    <location>
        <begin position="1"/>
        <end position="336"/>
    </location>
</feature>
<accession>Q05234</accession>
<reference key="1">
    <citation type="journal article" date="1993" name="Mol. Microbiol.">
        <title>DNA sequence, structure and gene expression of mycobacteriophage L5: a phage system for mycobacterial genetics.</title>
        <authorList>
            <person name="Hatfull G.F."/>
            <person name="Sarkis G.J."/>
        </authorList>
    </citation>
    <scope>NUCLEOTIDE SEQUENCE [GENOMIC DNA]</scope>
    <scope>PROTEIN SEQUENCE OF 1-8</scope>
</reference>
<dbReference type="EMBL" id="Z18946">
    <property type="protein sequence ID" value="CAA79403.1"/>
    <property type="molecule type" value="Genomic_DNA"/>
</dbReference>
<dbReference type="PIR" id="S30972">
    <property type="entry name" value="S30972"/>
</dbReference>
<dbReference type="RefSeq" id="NP_039691.1">
    <property type="nucleotide sequence ID" value="NC_001335.1"/>
</dbReference>
<dbReference type="SMR" id="Q05234"/>
<dbReference type="GeneID" id="2942941"/>
<dbReference type="KEGG" id="vg:2942941"/>
<dbReference type="OrthoDB" id="2201at10239"/>
<dbReference type="Proteomes" id="UP000002123">
    <property type="component" value="Genome"/>
</dbReference>
<sequence length="336" mass="38556">MITDTIVELEGVNGERFNLTTGDQGVYLATDVEGCFYDPPVKVVVEEPGNYPGARYLSHRALKRDIVFGVVILNDAKQGPRSWLSRDSEWRKAWAFNRTCKLYVTTPDSGTRYLKLALFESPTVKMDTDPRGKPLEVTVMSCIAYDPFWYEDDKVFSAKTKTDTRFDPSFWTPPWPWEELPKETLRIKVGREQGGLNPTDQYIFPKWTVPGSTEKVPNFPWPFPPNVPIPWETAPFTQFVIPDYSFEDEEFRNRRLKTPGLIYGENCVIDTDRREEQIASESGSPVWARMNGVRFRNSIPPYTEEAEFVIDASGCAPGQVVTLRLTRPWSRCWGLE</sequence>